<sequence>MTTDPSVKLKSAKDSLVSSLFELSKAANQTASSIVDFYNAIGDDEEEKIEAFTTLTESLQTLTSGVNHLHGISSELVNPIDDDKDAIIAAPVKAVRRKIERDPNAPKKPLTVFFAYSAYVRQELREDRQKAGLPPLSSTEITQEISKKWKELSDNEKEKWKQAYNVELENYQREKSKYLEAKKNGTLPPASLENGPTHAPVPIPFSLQHAAEPPVEKRPHDDDGSSEKKKKKKKKDKKKDKSNSSI</sequence>
<keyword id="KW-0903">Direct protein sequencing</keyword>
<keyword id="KW-0238">DNA-binding</keyword>
<keyword id="KW-0539">Nucleus</keyword>
<keyword id="KW-1185">Reference proteome</keyword>
<keyword id="KW-0804">Transcription</keyword>
<keyword id="KW-0805">Transcription regulation</keyword>
<gene>
    <name type="primary">HMO1</name>
    <name type="synonym">HSM2</name>
    <name type="ordered locus">YDR174W</name>
    <name type="ORF">YD9395.07</name>
</gene>
<proteinExistence type="evidence at protein level"/>
<accession>Q03973</accession>
<accession>D6VSF6</accession>
<protein>
    <recommendedName>
        <fullName>High mobility group protein 1</fullName>
    </recommendedName>
    <alternativeName>
        <fullName>High spontaneous mutagenesis protein 2</fullName>
    </alternativeName>
</protein>
<feature type="chain" id="PRO_0000048564" description="High mobility group protein 1">
    <location>
        <begin position="1"/>
        <end position="246"/>
    </location>
</feature>
<feature type="DNA-binding region" description="HMG box" evidence="1">
    <location>
        <begin position="106"/>
        <end position="179"/>
    </location>
</feature>
<feature type="region of interest" description="Disordered" evidence="2">
    <location>
        <begin position="179"/>
        <end position="246"/>
    </location>
</feature>
<feature type="compositionally biased region" description="Basic and acidic residues" evidence="2">
    <location>
        <begin position="214"/>
        <end position="227"/>
    </location>
</feature>
<feature type="compositionally biased region" description="Basic residues" evidence="2">
    <location>
        <begin position="228"/>
        <end position="238"/>
    </location>
</feature>
<evidence type="ECO:0000255" key="1">
    <source>
        <dbReference type="PROSITE-ProRule" id="PRU00267"/>
    </source>
</evidence>
<evidence type="ECO:0000256" key="2">
    <source>
        <dbReference type="SAM" id="MobiDB-lite"/>
    </source>
</evidence>
<evidence type="ECO:0000269" key="3">
    <source>
    </source>
</evidence>
<evidence type="ECO:0000269" key="4">
    <source>
    </source>
</evidence>
<evidence type="ECO:0000269" key="5">
    <source>
    </source>
</evidence>
<evidence type="ECO:0000269" key="6">
    <source>
    </source>
</evidence>
<evidence type="ECO:0000269" key="7">
    <source>
    </source>
</evidence>
<evidence type="ECO:0000269" key="8">
    <source>
    </source>
</evidence>
<organism>
    <name type="scientific">Saccharomyces cerevisiae (strain ATCC 204508 / S288c)</name>
    <name type="common">Baker's yeast</name>
    <dbReference type="NCBI Taxonomy" id="559292"/>
    <lineage>
        <taxon>Eukaryota</taxon>
        <taxon>Fungi</taxon>
        <taxon>Dikarya</taxon>
        <taxon>Ascomycota</taxon>
        <taxon>Saccharomycotina</taxon>
        <taxon>Saccharomycetes</taxon>
        <taxon>Saccharomycetales</taxon>
        <taxon>Saccharomycetaceae</taxon>
        <taxon>Saccharomyces</taxon>
    </lineage>
</organism>
<comment type="function">
    <text evidence="4 5">DNA-binding protein that is probably part of the rDNA transcription apparatus. Acts synergetically with the RPA49 subunit of RNA polymerase I during rDNA transcription. May participate in mutagenesis control.</text>
</comment>
<comment type="subunit">
    <text evidence="3">Interacts with FPR1. Interacts with an unidentified DNA helicase. Associates with rDNA.</text>
</comment>
<comment type="interaction">
    <interactant intactId="EBI-33047">
        <id>Q03973</id>
    </interactant>
    <interactant intactId="EBI-32195">
        <id>Q12050</id>
        <label>ELG1</label>
    </interactant>
    <organismsDiffer>false</organismsDiffer>
    <experiments>2</experiments>
</comment>
<comment type="subcellular location">
    <subcellularLocation>
        <location evidence="4 6 8">Nucleus</location>
        <location evidence="4 6 8">Nucleolus</location>
    </subcellularLocation>
    <text>Colocalizes with FOB1.</text>
</comment>
<comment type="miscellaneous">
    <text evidence="7">Present with 19000 molecules/cell in log phase SD medium.</text>
</comment>
<dbReference type="EMBL" id="Z46727">
    <property type="protein sequence ID" value="CAA86679.1"/>
    <property type="molecule type" value="Genomic_DNA"/>
</dbReference>
<dbReference type="EMBL" id="AY557680">
    <property type="protein sequence ID" value="AAS56006.1"/>
    <property type="molecule type" value="Genomic_DNA"/>
</dbReference>
<dbReference type="EMBL" id="BK006938">
    <property type="protein sequence ID" value="DAA12016.1"/>
    <property type="molecule type" value="Genomic_DNA"/>
</dbReference>
<dbReference type="PIR" id="S49770">
    <property type="entry name" value="S49770"/>
</dbReference>
<dbReference type="RefSeq" id="NP_010459.1">
    <property type="nucleotide sequence ID" value="NM_001180481.1"/>
</dbReference>
<dbReference type="SMR" id="Q03973"/>
<dbReference type="BioGRID" id="32227">
    <property type="interactions" value="403"/>
</dbReference>
<dbReference type="DIP" id="DIP-1687N"/>
<dbReference type="FunCoup" id="Q03973">
    <property type="interactions" value="366"/>
</dbReference>
<dbReference type="IntAct" id="Q03973">
    <property type="interactions" value="99"/>
</dbReference>
<dbReference type="MINT" id="Q03973"/>
<dbReference type="STRING" id="4932.YDR174W"/>
<dbReference type="iPTMnet" id="Q03973"/>
<dbReference type="PaxDb" id="4932-YDR174W"/>
<dbReference type="PeptideAtlas" id="Q03973"/>
<dbReference type="EnsemblFungi" id="YDR174W_mRNA">
    <property type="protein sequence ID" value="YDR174W"/>
    <property type="gene ID" value="YDR174W"/>
</dbReference>
<dbReference type="GeneID" id="851754"/>
<dbReference type="KEGG" id="sce:YDR174W"/>
<dbReference type="AGR" id="SGD:S000002581"/>
<dbReference type="SGD" id="S000002581">
    <property type="gene designation" value="HMO1"/>
</dbReference>
<dbReference type="VEuPathDB" id="FungiDB:YDR174W"/>
<dbReference type="eggNOG" id="KOG0381">
    <property type="taxonomic scope" value="Eukaryota"/>
</dbReference>
<dbReference type="HOGENOM" id="CLU_076155_0_0_1"/>
<dbReference type="InParanoid" id="Q03973"/>
<dbReference type="OMA" id="DKWKQAY"/>
<dbReference type="OrthoDB" id="5550281at2759"/>
<dbReference type="BioCyc" id="YEAST:G3O-29763-MONOMER"/>
<dbReference type="Reactome" id="R-SCE-140342">
    <property type="pathway name" value="Apoptosis induced DNA fragmentation"/>
</dbReference>
<dbReference type="Reactome" id="R-SCE-163282">
    <property type="pathway name" value="Mitochondrial transcription initiation"/>
</dbReference>
<dbReference type="Reactome" id="R-SCE-5620971">
    <property type="pathway name" value="Pyroptosis"/>
</dbReference>
<dbReference type="Reactome" id="R-SCE-5686938">
    <property type="pathway name" value="Regulation of TLR by endogenous ligand"/>
</dbReference>
<dbReference type="Reactome" id="R-SCE-6798695">
    <property type="pathway name" value="Neutrophil degranulation"/>
</dbReference>
<dbReference type="Reactome" id="R-SCE-9837999">
    <property type="pathway name" value="Mitochondrial protein degradation"/>
</dbReference>
<dbReference type="BioGRID-ORCS" id="851754">
    <property type="hits" value="8 hits in 10 CRISPR screens"/>
</dbReference>
<dbReference type="PRO" id="PR:Q03973"/>
<dbReference type="Proteomes" id="UP000002311">
    <property type="component" value="Chromosome IV"/>
</dbReference>
<dbReference type="RNAct" id="Q03973">
    <property type="molecule type" value="protein"/>
</dbReference>
<dbReference type="GO" id="GO:0000785">
    <property type="term" value="C:chromatin"/>
    <property type="evidence" value="ECO:0000314"/>
    <property type="project" value="SGD"/>
</dbReference>
<dbReference type="GO" id="GO:0005737">
    <property type="term" value="C:cytoplasm"/>
    <property type="evidence" value="ECO:0000314"/>
    <property type="project" value="SGD"/>
</dbReference>
<dbReference type="GO" id="GO:0005829">
    <property type="term" value="C:cytosol"/>
    <property type="evidence" value="ECO:0000314"/>
    <property type="project" value="SGD"/>
</dbReference>
<dbReference type="GO" id="GO:0005730">
    <property type="term" value="C:nucleolus"/>
    <property type="evidence" value="ECO:0000314"/>
    <property type="project" value="SGD"/>
</dbReference>
<dbReference type="GO" id="GO:0005634">
    <property type="term" value="C:nucleus"/>
    <property type="evidence" value="ECO:0000314"/>
    <property type="project" value="SGD"/>
</dbReference>
<dbReference type="GO" id="GO:0033553">
    <property type="term" value="C:rDNA heterochromatin"/>
    <property type="evidence" value="ECO:0000314"/>
    <property type="project" value="SGD"/>
</dbReference>
<dbReference type="GO" id="GO:0032040">
    <property type="term" value="C:small-subunit processome"/>
    <property type="evidence" value="ECO:0000314"/>
    <property type="project" value="SGD"/>
</dbReference>
<dbReference type="GO" id="GO:0008301">
    <property type="term" value="F:DNA binding, bending"/>
    <property type="evidence" value="ECO:0000314"/>
    <property type="project" value="SGD"/>
</dbReference>
<dbReference type="GO" id="GO:0003690">
    <property type="term" value="F:double-stranded DNA binding"/>
    <property type="evidence" value="ECO:0000314"/>
    <property type="project" value="SGD"/>
</dbReference>
<dbReference type="GO" id="GO:0000400">
    <property type="term" value="F:four-way junction DNA binding"/>
    <property type="evidence" value="ECO:0000314"/>
    <property type="project" value="SGD"/>
</dbReference>
<dbReference type="GO" id="GO:0006325">
    <property type="term" value="P:chromatin organization"/>
    <property type="evidence" value="ECO:0000314"/>
    <property type="project" value="SGD"/>
</dbReference>
<dbReference type="GO" id="GO:0006338">
    <property type="term" value="P:chromatin remodeling"/>
    <property type="evidence" value="ECO:0000314"/>
    <property type="project" value="SGD"/>
</dbReference>
<dbReference type="GO" id="GO:0030261">
    <property type="term" value="P:chromosome condensation"/>
    <property type="evidence" value="ECO:0000315"/>
    <property type="project" value="SGD"/>
</dbReference>
<dbReference type="GO" id="GO:0051276">
    <property type="term" value="P:chromosome organization"/>
    <property type="evidence" value="ECO:0000314"/>
    <property type="project" value="SGD"/>
</dbReference>
<dbReference type="GO" id="GO:0006265">
    <property type="term" value="P:DNA topological change"/>
    <property type="evidence" value="ECO:0000315"/>
    <property type="project" value="SGD"/>
</dbReference>
<dbReference type="GO" id="GO:0044804">
    <property type="term" value="P:nucleophagy"/>
    <property type="evidence" value="ECO:0000315"/>
    <property type="project" value="SGD"/>
</dbReference>
<dbReference type="GO" id="GO:2001034">
    <property type="term" value="P:positive regulation of double-strand break repair via nonhomologous end joining"/>
    <property type="evidence" value="ECO:0000315"/>
    <property type="project" value="CACAO"/>
</dbReference>
<dbReference type="GO" id="GO:0070550">
    <property type="term" value="P:rDNA chromatin condensation"/>
    <property type="evidence" value="ECO:0000315"/>
    <property type="project" value="SGD"/>
</dbReference>
<dbReference type="GO" id="GO:0060962">
    <property type="term" value="P:regulation of ribosomal protein gene transcription by RNA polymerase II"/>
    <property type="evidence" value="ECO:0000315"/>
    <property type="project" value="SGD"/>
</dbReference>
<dbReference type="GO" id="GO:0006356">
    <property type="term" value="P:regulation of transcription by RNA polymerase I"/>
    <property type="evidence" value="ECO:0000315"/>
    <property type="project" value="SGD"/>
</dbReference>
<dbReference type="GO" id="GO:0001174">
    <property type="term" value="P:transcriptional start site selection at RNA polymerase II promoter"/>
    <property type="evidence" value="ECO:0000315"/>
    <property type="project" value="SGD"/>
</dbReference>
<dbReference type="CDD" id="cd22015">
    <property type="entry name" value="HMG-box_HMO1-like"/>
    <property type="match status" value="1"/>
</dbReference>
<dbReference type="FunFam" id="1.10.30.10:FF:000066">
    <property type="entry name" value="High mobility group family"/>
    <property type="match status" value="1"/>
</dbReference>
<dbReference type="Gene3D" id="1.10.30.10">
    <property type="entry name" value="High mobility group box domain"/>
    <property type="match status" value="1"/>
</dbReference>
<dbReference type="InterPro" id="IPR009071">
    <property type="entry name" value="HMG_box_dom"/>
</dbReference>
<dbReference type="InterPro" id="IPR036910">
    <property type="entry name" value="HMG_box_dom_sf"/>
</dbReference>
<dbReference type="InterPro" id="IPR050342">
    <property type="entry name" value="HMGB"/>
</dbReference>
<dbReference type="PANTHER" id="PTHR48112:SF24">
    <property type="entry name" value="HIGH MOBILITY GROUP PROTEIN 1"/>
    <property type="match status" value="1"/>
</dbReference>
<dbReference type="PANTHER" id="PTHR48112">
    <property type="entry name" value="HIGH MOBILITY GROUP PROTEIN DSP1"/>
    <property type="match status" value="1"/>
</dbReference>
<dbReference type="Pfam" id="PF00505">
    <property type="entry name" value="HMG_box"/>
    <property type="match status" value="1"/>
</dbReference>
<dbReference type="SMART" id="SM00398">
    <property type="entry name" value="HMG"/>
    <property type="match status" value="1"/>
</dbReference>
<dbReference type="SUPFAM" id="SSF47095">
    <property type="entry name" value="HMG-box"/>
    <property type="match status" value="1"/>
</dbReference>
<dbReference type="PROSITE" id="PS50118">
    <property type="entry name" value="HMG_BOX_2"/>
    <property type="match status" value="1"/>
</dbReference>
<reference key="1">
    <citation type="journal article" date="1997" name="Nature">
        <title>The nucleotide sequence of Saccharomyces cerevisiae chromosome IV.</title>
        <authorList>
            <person name="Jacq C."/>
            <person name="Alt-Moerbe J."/>
            <person name="Andre B."/>
            <person name="Arnold W."/>
            <person name="Bahr A."/>
            <person name="Ballesta J.P.G."/>
            <person name="Bargues M."/>
            <person name="Baron L."/>
            <person name="Becker A."/>
            <person name="Biteau N."/>
            <person name="Bloecker H."/>
            <person name="Blugeon C."/>
            <person name="Boskovic J."/>
            <person name="Brandt P."/>
            <person name="Brueckner M."/>
            <person name="Buitrago M.J."/>
            <person name="Coster F."/>
            <person name="Delaveau T."/>
            <person name="del Rey F."/>
            <person name="Dujon B."/>
            <person name="Eide L.G."/>
            <person name="Garcia-Cantalejo J.M."/>
            <person name="Goffeau A."/>
            <person name="Gomez-Peris A."/>
            <person name="Granotier C."/>
            <person name="Hanemann V."/>
            <person name="Hankeln T."/>
            <person name="Hoheisel J.D."/>
            <person name="Jaeger W."/>
            <person name="Jimenez A."/>
            <person name="Jonniaux J.-L."/>
            <person name="Kraemer C."/>
            <person name="Kuester H."/>
            <person name="Laamanen P."/>
            <person name="Legros Y."/>
            <person name="Louis E.J."/>
            <person name="Moeller-Rieker S."/>
            <person name="Monnet A."/>
            <person name="Moro M."/>
            <person name="Mueller-Auer S."/>
            <person name="Nussbaumer B."/>
            <person name="Paricio N."/>
            <person name="Paulin L."/>
            <person name="Perea J."/>
            <person name="Perez-Alonso M."/>
            <person name="Perez-Ortin J.E."/>
            <person name="Pohl T.M."/>
            <person name="Prydz H."/>
            <person name="Purnelle B."/>
            <person name="Rasmussen S.W."/>
            <person name="Remacha M.A."/>
            <person name="Revuelta J.L."/>
            <person name="Rieger M."/>
            <person name="Salom D."/>
            <person name="Saluz H.P."/>
            <person name="Saiz J.E."/>
            <person name="Saren A.-M."/>
            <person name="Schaefer M."/>
            <person name="Scharfe M."/>
            <person name="Schmidt E.R."/>
            <person name="Schneider C."/>
            <person name="Scholler P."/>
            <person name="Schwarz S."/>
            <person name="Soler-Mira A."/>
            <person name="Urrestarazu L.A."/>
            <person name="Verhasselt P."/>
            <person name="Vissers S."/>
            <person name="Voet M."/>
            <person name="Volckaert G."/>
            <person name="Wagner G."/>
            <person name="Wambutt R."/>
            <person name="Wedler E."/>
            <person name="Wedler H."/>
            <person name="Woelfl S."/>
            <person name="Harris D.E."/>
            <person name="Bowman S."/>
            <person name="Brown D."/>
            <person name="Churcher C.M."/>
            <person name="Connor R."/>
            <person name="Dedman K."/>
            <person name="Gentles S."/>
            <person name="Hamlin N."/>
            <person name="Hunt S."/>
            <person name="Jones L."/>
            <person name="McDonald S."/>
            <person name="Murphy L.D."/>
            <person name="Niblett D."/>
            <person name="Odell C."/>
            <person name="Oliver K."/>
            <person name="Rajandream M.A."/>
            <person name="Richards C."/>
            <person name="Shore L."/>
            <person name="Walsh S.V."/>
            <person name="Barrell B.G."/>
            <person name="Dietrich F.S."/>
            <person name="Mulligan J.T."/>
            <person name="Allen E."/>
            <person name="Araujo R."/>
            <person name="Aviles E."/>
            <person name="Berno A."/>
            <person name="Carpenter J."/>
            <person name="Chen E."/>
            <person name="Cherry J.M."/>
            <person name="Chung E."/>
            <person name="Duncan M."/>
            <person name="Hunicke-Smith S."/>
            <person name="Hyman R.W."/>
            <person name="Komp C."/>
            <person name="Lashkari D."/>
            <person name="Lew H."/>
            <person name="Lin D."/>
            <person name="Mosedale D."/>
            <person name="Nakahara K."/>
            <person name="Namath A."/>
            <person name="Oefner P."/>
            <person name="Oh C."/>
            <person name="Petel F.X."/>
            <person name="Roberts D."/>
            <person name="Schramm S."/>
            <person name="Schroeder M."/>
            <person name="Shogren T."/>
            <person name="Shroff N."/>
            <person name="Winant A."/>
            <person name="Yelton M.A."/>
            <person name="Botstein D."/>
            <person name="Davis R.W."/>
            <person name="Johnston M."/>
            <person name="Andrews S."/>
            <person name="Brinkman R."/>
            <person name="Cooper J."/>
            <person name="Ding H."/>
            <person name="Du Z."/>
            <person name="Favello A."/>
            <person name="Fulton L."/>
            <person name="Gattung S."/>
            <person name="Greco T."/>
            <person name="Hallsworth K."/>
            <person name="Hawkins J."/>
            <person name="Hillier L.W."/>
            <person name="Jier M."/>
            <person name="Johnson D."/>
            <person name="Johnston L."/>
            <person name="Kirsten J."/>
            <person name="Kucaba T."/>
            <person name="Langston Y."/>
            <person name="Latreille P."/>
            <person name="Le T."/>
            <person name="Mardis E."/>
            <person name="Menezes S."/>
            <person name="Miller N."/>
            <person name="Nhan M."/>
            <person name="Pauley A."/>
            <person name="Peluso D."/>
            <person name="Rifkin L."/>
            <person name="Riles L."/>
            <person name="Taich A."/>
            <person name="Trevaskis E."/>
            <person name="Vignati D."/>
            <person name="Wilcox L."/>
            <person name="Wohldman P."/>
            <person name="Vaudin M."/>
            <person name="Wilson R."/>
            <person name="Waterston R."/>
            <person name="Albermann K."/>
            <person name="Hani J."/>
            <person name="Heumann K."/>
            <person name="Kleine K."/>
            <person name="Mewes H.-W."/>
            <person name="Zollner A."/>
            <person name="Zaccaria P."/>
        </authorList>
    </citation>
    <scope>NUCLEOTIDE SEQUENCE [LARGE SCALE GENOMIC DNA]</scope>
    <source>
        <strain>ATCC 204508 / S288c</strain>
    </source>
</reference>
<reference key="2">
    <citation type="journal article" date="2014" name="G3 (Bethesda)">
        <title>The reference genome sequence of Saccharomyces cerevisiae: Then and now.</title>
        <authorList>
            <person name="Engel S.R."/>
            <person name="Dietrich F.S."/>
            <person name="Fisk D.G."/>
            <person name="Binkley G."/>
            <person name="Balakrishnan R."/>
            <person name="Costanzo M.C."/>
            <person name="Dwight S.S."/>
            <person name="Hitz B.C."/>
            <person name="Karra K."/>
            <person name="Nash R.S."/>
            <person name="Weng S."/>
            <person name="Wong E.D."/>
            <person name="Lloyd P."/>
            <person name="Skrzypek M.S."/>
            <person name="Miyasato S.R."/>
            <person name="Simison M."/>
            <person name="Cherry J.M."/>
        </authorList>
    </citation>
    <scope>GENOME REANNOTATION</scope>
    <source>
        <strain>ATCC 204508 / S288c</strain>
    </source>
</reference>
<reference key="3">
    <citation type="journal article" date="2007" name="Genome Res.">
        <title>Approaching a complete repository of sequence-verified protein-encoding clones for Saccharomyces cerevisiae.</title>
        <authorList>
            <person name="Hu Y."/>
            <person name="Rolfs A."/>
            <person name="Bhullar B."/>
            <person name="Murthy T.V.S."/>
            <person name="Zhu C."/>
            <person name="Berger M.F."/>
            <person name="Camargo A.A."/>
            <person name="Kelley F."/>
            <person name="McCarron S."/>
            <person name="Jepson D."/>
            <person name="Richardson A."/>
            <person name="Raphael J."/>
            <person name="Moreira D."/>
            <person name="Taycher E."/>
            <person name="Zuo D."/>
            <person name="Mohr S."/>
            <person name="Kane M.F."/>
            <person name="Williamson J."/>
            <person name="Simpson A.J.G."/>
            <person name="Bulyk M.L."/>
            <person name="Harlow E."/>
            <person name="Marsischky G."/>
            <person name="Kolodner R.D."/>
            <person name="LaBaer J."/>
        </authorList>
    </citation>
    <scope>NUCLEOTIDE SEQUENCE [GENOMIC DNA]</scope>
    <source>
        <strain>ATCC 204508 / S288c</strain>
    </source>
</reference>
<reference key="4">
    <citation type="journal article" date="1996" name="J. Biol. Chem.">
        <title>Characterization of a high mobility group 1/2 homolog in yeast.</title>
        <authorList>
            <person name="Lu J."/>
            <person name="Kobayashi R."/>
            <person name="Brill S.J."/>
        </authorList>
    </citation>
    <scope>PROTEIN SEQUENCE OF 14-25; 51-84 AND 163-175</scope>
    <scope>SUBCELLULAR LOCATION</scope>
    <scope>DNA-BINDING</scope>
</reference>
<reference key="5">
    <citation type="journal article" date="1999" name="Genetics">
        <title>Hmo1p, a high mobility group 1/2 homolog, genetically and physically interacts with the yeast FKBP12 prolyl isomerase.</title>
        <authorList>
            <person name="Dolinski K.J."/>
            <person name="Heitman J."/>
        </authorList>
    </citation>
    <scope>INTERACTION WITH FPR1</scope>
</reference>
<reference key="6">
    <citation type="journal article" date="2002" name="DNA Repair">
        <title>HSM2 (HMO1) gene participates in mutagenesis control in yeast Saccharomyces cerevisiae.</title>
        <authorList>
            <person name="Alekseev S.Y."/>
            <person name="Kovaltsova S.V."/>
            <person name="Fedorova I.V."/>
            <person name="Gracheva L.M."/>
            <person name="Evstukhina T.A."/>
            <person name="Peshekhonov V.T."/>
            <person name="Korolev V.G."/>
        </authorList>
    </citation>
    <scope>FUNCTION</scope>
</reference>
<reference key="7">
    <citation type="journal article" date="2002" name="EMBO J.">
        <title>Hmo1, an HMG-box protein, belongs to the yeast ribosomal DNA transcription system.</title>
        <authorList>
            <person name="Gadal O."/>
            <person name="Labarre S."/>
            <person name="Boschiero C."/>
            <person name="Thuriaux P."/>
        </authorList>
    </citation>
    <scope>SUBCELLULAR LOCATION</scope>
    <scope>FUNCTION</scope>
</reference>
<reference key="8">
    <citation type="journal article" date="2003" name="Nature">
        <title>Global analysis of protein localization in budding yeast.</title>
        <authorList>
            <person name="Huh W.-K."/>
            <person name="Falvo J.V."/>
            <person name="Gerke L.C."/>
            <person name="Carroll A.S."/>
            <person name="Howson R.W."/>
            <person name="Weissman J.S."/>
            <person name="O'Shea E.K."/>
        </authorList>
    </citation>
    <scope>SUBCELLULAR LOCATION [LARGE SCALE ANALYSIS]</scope>
</reference>
<reference key="9">
    <citation type="journal article" date="2003" name="Nature">
        <title>Global analysis of protein expression in yeast.</title>
        <authorList>
            <person name="Ghaemmaghami S."/>
            <person name="Huh W.-K."/>
            <person name="Bower K."/>
            <person name="Howson R.W."/>
            <person name="Belle A."/>
            <person name="Dephoure N."/>
            <person name="O'Shea E.K."/>
            <person name="Weissman J.S."/>
        </authorList>
    </citation>
    <scope>LEVEL OF PROTEIN EXPRESSION [LARGE SCALE ANALYSIS]</scope>
</reference>
<name>HMO1_YEAST</name>